<accession>Q8UFE8</accession>
<proteinExistence type="inferred from homology"/>
<name>HFQ_AGRFC</name>
<dbReference type="EMBL" id="AE007869">
    <property type="protein sequence ID" value="AAL42456.1"/>
    <property type="molecule type" value="Genomic_DNA"/>
</dbReference>
<dbReference type="PIR" id="AB2755">
    <property type="entry name" value="AB2755"/>
</dbReference>
<dbReference type="RefSeq" id="NP_532140.1">
    <property type="nucleotide sequence ID" value="NC_003062.2"/>
</dbReference>
<dbReference type="RefSeq" id="WP_003496145.1">
    <property type="nucleotide sequence ID" value="NC_003062.2"/>
</dbReference>
<dbReference type="SMR" id="Q8UFE8"/>
<dbReference type="STRING" id="176299.Atu1450"/>
<dbReference type="EnsemblBacteria" id="AAL42456">
    <property type="protein sequence ID" value="AAL42456"/>
    <property type="gene ID" value="Atu1450"/>
</dbReference>
<dbReference type="GeneID" id="97364220"/>
<dbReference type="KEGG" id="atu:Atu1450"/>
<dbReference type="PATRIC" id="fig|176299.10.peg.1471"/>
<dbReference type="eggNOG" id="COG1923">
    <property type="taxonomic scope" value="Bacteria"/>
</dbReference>
<dbReference type="HOGENOM" id="CLU_113688_0_0_5"/>
<dbReference type="OrthoDB" id="9799751at2"/>
<dbReference type="PhylomeDB" id="Q8UFE8"/>
<dbReference type="BioCyc" id="AGRO:ATU1450-MONOMER"/>
<dbReference type="PRO" id="PR:Q8UFE8"/>
<dbReference type="Proteomes" id="UP000000813">
    <property type="component" value="Chromosome circular"/>
</dbReference>
<dbReference type="GO" id="GO:0005829">
    <property type="term" value="C:cytosol"/>
    <property type="evidence" value="ECO:0007669"/>
    <property type="project" value="TreeGrafter"/>
</dbReference>
<dbReference type="GO" id="GO:0003723">
    <property type="term" value="F:RNA binding"/>
    <property type="evidence" value="ECO:0007669"/>
    <property type="project" value="UniProtKB-UniRule"/>
</dbReference>
<dbReference type="GO" id="GO:0006355">
    <property type="term" value="P:regulation of DNA-templated transcription"/>
    <property type="evidence" value="ECO:0007669"/>
    <property type="project" value="InterPro"/>
</dbReference>
<dbReference type="GO" id="GO:0043487">
    <property type="term" value="P:regulation of RNA stability"/>
    <property type="evidence" value="ECO:0007669"/>
    <property type="project" value="TreeGrafter"/>
</dbReference>
<dbReference type="GO" id="GO:0045974">
    <property type="term" value="P:regulation of translation, ncRNA-mediated"/>
    <property type="evidence" value="ECO:0007669"/>
    <property type="project" value="TreeGrafter"/>
</dbReference>
<dbReference type="CDD" id="cd01716">
    <property type="entry name" value="Hfq"/>
    <property type="match status" value="1"/>
</dbReference>
<dbReference type="Gene3D" id="2.30.30.100">
    <property type="match status" value="1"/>
</dbReference>
<dbReference type="HAMAP" id="MF_00436">
    <property type="entry name" value="Hfq"/>
    <property type="match status" value="1"/>
</dbReference>
<dbReference type="InterPro" id="IPR005001">
    <property type="entry name" value="Hfq"/>
</dbReference>
<dbReference type="InterPro" id="IPR010920">
    <property type="entry name" value="LSM_dom_sf"/>
</dbReference>
<dbReference type="InterPro" id="IPR047575">
    <property type="entry name" value="Sm"/>
</dbReference>
<dbReference type="NCBIfam" id="TIGR02383">
    <property type="entry name" value="Hfq"/>
    <property type="match status" value="1"/>
</dbReference>
<dbReference type="NCBIfam" id="NF001602">
    <property type="entry name" value="PRK00395.1"/>
    <property type="match status" value="1"/>
</dbReference>
<dbReference type="PANTHER" id="PTHR34772">
    <property type="entry name" value="RNA-BINDING PROTEIN HFQ"/>
    <property type="match status" value="1"/>
</dbReference>
<dbReference type="PANTHER" id="PTHR34772:SF1">
    <property type="entry name" value="RNA-BINDING PROTEIN HFQ"/>
    <property type="match status" value="1"/>
</dbReference>
<dbReference type="Pfam" id="PF17209">
    <property type="entry name" value="Hfq"/>
    <property type="match status" value="1"/>
</dbReference>
<dbReference type="SUPFAM" id="SSF50182">
    <property type="entry name" value="Sm-like ribonucleoproteins"/>
    <property type="match status" value="1"/>
</dbReference>
<dbReference type="PROSITE" id="PS52002">
    <property type="entry name" value="SM"/>
    <property type="match status" value="1"/>
</dbReference>
<reference key="1">
    <citation type="journal article" date="2001" name="Science">
        <title>The genome of the natural genetic engineer Agrobacterium tumefaciens C58.</title>
        <authorList>
            <person name="Wood D.W."/>
            <person name="Setubal J.C."/>
            <person name="Kaul R."/>
            <person name="Monks D.E."/>
            <person name="Kitajima J.P."/>
            <person name="Okura V.K."/>
            <person name="Zhou Y."/>
            <person name="Chen L."/>
            <person name="Wood G.E."/>
            <person name="Almeida N.F. Jr."/>
            <person name="Woo L."/>
            <person name="Chen Y."/>
            <person name="Paulsen I.T."/>
            <person name="Eisen J.A."/>
            <person name="Karp P.D."/>
            <person name="Bovee D. Sr."/>
            <person name="Chapman P."/>
            <person name="Clendenning J."/>
            <person name="Deatherage G."/>
            <person name="Gillet W."/>
            <person name="Grant C."/>
            <person name="Kutyavin T."/>
            <person name="Levy R."/>
            <person name="Li M.-J."/>
            <person name="McClelland E."/>
            <person name="Palmieri A."/>
            <person name="Raymond C."/>
            <person name="Rouse G."/>
            <person name="Saenphimmachak C."/>
            <person name="Wu Z."/>
            <person name="Romero P."/>
            <person name="Gordon D."/>
            <person name="Zhang S."/>
            <person name="Yoo H."/>
            <person name="Tao Y."/>
            <person name="Biddle P."/>
            <person name="Jung M."/>
            <person name="Krespan W."/>
            <person name="Perry M."/>
            <person name="Gordon-Kamm B."/>
            <person name="Liao L."/>
            <person name="Kim S."/>
            <person name="Hendrick C."/>
            <person name="Zhao Z.-Y."/>
            <person name="Dolan M."/>
            <person name="Chumley F."/>
            <person name="Tingey S.V."/>
            <person name="Tomb J.-F."/>
            <person name="Gordon M.P."/>
            <person name="Olson M.V."/>
            <person name="Nester E.W."/>
        </authorList>
    </citation>
    <scope>NUCLEOTIDE SEQUENCE [LARGE SCALE GENOMIC DNA]</scope>
    <source>
        <strain>C58 / ATCC 33970</strain>
    </source>
</reference>
<reference key="2">
    <citation type="journal article" date="2001" name="Science">
        <title>Genome sequence of the plant pathogen and biotechnology agent Agrobacterium tumefaciens C58.</title>
        <authorList>
            <person name="Goodner B."/>
            <person name="Hinkle G."/>
            <person name="Gattung S."/>
            <person name="Miller N."/>
            <person name="Blanchard M."/>
            <person name="Qurollo B."/>
            <person name="Goldman B.S."/>
            <person name="Cao Y."/>
            <person name="Askenazi M."/>
            <person name="Halling C."/>
            <person name="Mullin L."/>
            <person name="Houmiel K."/>
            <person name="Gordon J."/>
            <person name="Vaudin M."/>
            <person name="Iartchouk O."/>
            <person name="Epp A."/>
            <person name="Liu F."/>
            <person name="Wollam C."/>
            <person name="Allinger M."/>
            <person name="Doughty D."/>
            <person name="Scott C."/>
            <person name="Lappas C."/>
            <person name="Markelz B."/>
            <person name="Flanagan C."/>
            <person name="Crowell C."/>
            <person name="Gurson J."/>
            <person name="Lomo C."/>
            <person name="Sear C."/>
            <person name="Strub G."/>
            <person name="Cielo C."/>
            <person name="Slater S."/>
        </authorList>
    </citation>
    <scope>NUCLEOTIDE SEQUENCE [LARGE SCALE GENOMIC DNA]</scope>
    <source>
        <strain>C58 / ATCC 33970</strain>
    </source>
</reference>
<feature type="chain" id="PRO_0000095611" description="RNA-binding protein Hfq">
    <location>
        <begin position="1"/>
        <end position="80"/>
    </location>
</feature>
<feature type="domain" description="Sm" evidence="2">
    <location>
        <begin position="10"/>
        <end position="70"/>
    </location>
</feature>
<gene>
    <name evidence="1" type="primary">hfq</name>
    <name type="ordered locus">Atu1450</name>
    <name type="ORF">AGR_C_2673</name>
</gene>
<comment type="function">
    <text evidence="1">RNA chaperone that binds small regulatory RNA (sRNAs) and mRNAs to facilitate mRNA translational regulation in response to envelope stress, environmental stress and changes in metabolite concentrations. Also binds with high specificity to tRNAs.</text>
</comment>
<comment type="subunit">
    <text evidence="1">Homohexamer.</text>
</comment>
<comment type="similarity">
    <text evidence="1">Belongs to the Hfq family.</text>
</comment>
<organism>
    <name type="scientific">Agrobacterium fabrum (strain C58 / ATCC 33970)</name>
    <name type="common">Agrobacterium tumefaciens (strain C58)</name>
    <dbReference type="NCBI Taxonomy" id="176299"/>
    <lineage>
        <taxon>Bacteria</taxon>
        <taxon>Pseudomonadati</taxon>
        <taxon>Pseudomonadota</taxon>
        <taxon>Alphaproteobacteria</taxon>
        <taxon>Hyphomicrobiales</taxon>
        <taxon>Rhizobiaceae</taxon>
        <taxon>Rhizobium/Agrobacterium group</taxon>
        <taxon>Agrobacterium</taxon>
        <taxon>Agrobacterium tumefaciens complex</taxon>
    </lineage>
</organism>
<keyword id="KW-1185">Reference proteome</keyword>
<keyword id="KW-0694">RNA-binding</keyword>
<keyword id="KW-0346">Stress response</keyword>
<protein>
    <recommendedName>
        <fullName evidence="1">RNA-binding protein Hfq</fullName>
    </recommendedName>
</protein>
<evidence type="ECO:0000255" key="1">
    <source>
        <dbReference type="HAMAP-Rule" id="MF_00436"/>
    </source>
</evidence>
<evidence type="ECO:0000255" key="2">
    <source>
        <dbReference type="PROSITE-ProRule" id="PRU01346"/>
    </source>
</evidence>
<sequence length="80" mass="9014">MAERSQNLQDLFLNTVRKQKISLTIFLINGVKLTGVVTSFDNFCVLLRRDGHSQLVYKHAISTIMPGQPMQMFESEEGAA</sequence>